<accession>A7MJT5</accession>
<gene>
    <name evidence="1" type="primary">plsY</name>
    <name type="ordered locus">ESA_00359</name>
</gene>
<dbReference type="EC" id="2.3.1.275" evidence="1"/>
<dbReference type="EMBL" id="CP000783">
    <property type="protein sequence ID" value="ABU75657.1"/>
    <property type="molecule type" value="Genomic_DNA"/>
</dbReference>
<dbReference type="RefSeq" id="WP_012123807.1">
    <property type="nucleotide sequence ID" value="NC_009778.1"/>
</dbReference>
<dbReference type="SMR" id="A7MJT5"/>
<dbReference type="KEGG" id="esa:ESA_00359"/>
<dbReference type="PATRIC" id="fig|290339.8.peg.321"/>
<dbReference type="HOGENOM" id="CLU_081254_0_2_6"/>
<dbReference type="UniPathway" id="UPA00085"/>
<dbReference type="Proteomes" id="UP000000260">
    <property type="component" value="Chromosome"/>
</dbReference>
<dbReference type="GO" id="GO:0005886">
    <property type="term" value="C:plasma membrane"/>
    <property type="evidence" value="ECO:0007669"/>
    <property type="project" value="UniProtKB-SubCell"/>
</dbReference>
<dbReference type="GO" id="GO:0043772">
    <property type="term" value="F:acyl-phosphate glycerol-3-phosphate acyltransferase activity"/>
    <property type="evidence" value="ECO:0007669"/>
    <property type="project" value="UniProtKB-UniRule"/>
</dbReference>
<dbReference type="GO" id="GO:0008654">
    <property type="term" value="P:phospholipid biosynthetic process"/>
    <property type="evidence" value="ECO:0007669"/>
    <property type="project" value="UniProtKB-UniRule"/>
</dbReference>
<dbReference type="HAMAP" id="MF_01043">
    <property type="entry name" value="PlsY"/>
    <property type="match status" value="1"/>
</dbReference>
<dbReference type="InterPro" id="IPR003811">
    <property type="entry name" value="G3P_acylTferase_PlsY"/>
</dbReference>
<dbReference type="NCBIfam" id="TIGR00023">
    <property type="entry name" value="glycerol-3-phosphate 1-O-acyltransferase PlsY"/>
    <property type="match status" value="1"/>
</dbReference>
<dbReference type="PANTHER" id="PTHR30309:SF0">
    <property type="entry name" value="GLYCEROL-3-PHOSPHATE ACYLTRANSFERASE-RELATED"/>
    <property type="match status" value="1"/>
</dbReference>
<dbReference type="PANTHER" id="PTHR30309">
    <property type="entry name" value="INNER MEMBRANE PROTEIN YGIH"/>
    <property type="match status" value="1"/>
</dbReference>
<dbReference type="Pfam" id="PF02660">
    <property type="entry name" value="G3P_acyltransf"/>
    <property type="match status" value="1"/>
</dbReference>
<dbReference type="SMART" id="SM01207">
    <property type="entry name" value="G3P_acyltransf"/>
    <property type="match status" value="1"/>
</dbReference>
<keyword id="KW-0997">Cell inner membrane</keyword>
<keyword id="KW-1003">Cell membrane</keyword>
<keyword id="KW-0444">Lipid biosynthesis</keyword>
<keyword id="KW-0443">Lipid metabolism</keyword>
<keyword id="KW-0472">Membrane</keyword>
<keyword id="KW-0594">Phospholipid biosynthesis</keyword>
<keyword id="KW-1208">Phospholipid metabolism</keyword>
<keyword id="KW-1185">Reference proteome</keyword>
<keyword id="KW-0808">Transferase</keyword>
<keyword id="KW-0812">Transmembrane</keyword>
<keyword id="KW-1133">Transmembrane helix</keyword>
<proteinExistence type="inferred from homology"/>
<comment type="function">
    <text evidence="1">Catalyzes the transfer of an acyl group from acyl-phosphate (acyl-PO(4)) to glycerol-3-phosphate (G3P) to form lysophosphatidic acid (LPA). This enzyme utilizes acyl-phosphate as fatty acyl donor, but not acyl-CoA or acyl-ACP.</text>
</comment>
<comment type="catalytic activity">
    <reaction evidence="1">
        <text>an acyl phosphate + sn-glycerol 3-phosphate = a 1-acyl-sn-glycero-3-phosphate + phosphate</text>
        <dbReference type="Rhea" id="RHEA:34075"/>
        <dbReference type="ChEBI" id="CHEBI:43474"/>
        <dbReference type="ChEBI" id="CHEBI:57597"/>
        <dbReference type="ChEBI" id="CHEBI:57970"/>
        <dbReference type="ChEBI" id="CHEBI:59918"/>
        <dbReference type="EC" id="2.3.1.275"/>
    </reaction>
</comment>
<comment type="pathway">
    <text evidence="1">Lipid metabolism; phospholipid metabolism.</text>
</comment>
<comment type="subunit">
    <text evidence="1">Probably interacts with PlsX.</text>
</comment>
<comment type="subcellular location">
    <subcellularLocation>
        <location evidence="1">Cell inner membrane</location>
        <topology evidence="1">Multi-pass membrane protein</topology>
    </subcellularLocation>
</comment>
<comment type="similarity">
    <text evidence="1">Belongs to the PlsY family.</text>
</comment>
<name>PLSY_CROS8</name>
<evidence type="ECO:0000255" key="1">
    <source>
        <dbReference type="HAMAP-Rule" id="MF_01043"/>
    </source>
</evidence>
<organism>
    <name type="scientific">Cronobacter sakazakii (strain ATCC BAA-894)</name>
    <name type="common">Enterobacter sakazakii</name>
    <dbReference type="NCBI Taxonomy" id="290339"/>
    <lineage>
        <taxon>Bacteria</taxon>
        <taxon>Pseudomonadati</taxon>
        <taxon>Pseudomonadota</taxon>
        <taxon>Gammaproteobacteria</taxon>
        <taxon>Enterobacterales</taxon>
        <taxon>Enterobacteriaceae</taxon>
        <taxon>Cronobacter</taxon>
    </lineage>
</organism>
<sequence>MSAIAPGMILLAYLCGSISSAILVCRIAGLPDPRDSGSGNPGATNVLRIGGKGAALAVLIFDVLKGMLPVWGAYALGVTPFWLGLIAIAACLGHIWPIFFHFRGGKGVATAFGAIAPIGWDLTGVMAGTWLLTVLLSGYSSLGAIVSALVAPFYVWWFKPQFTFPVAMLSCLILLRHHDNIQRLWRGQESKIWSRFRKKRPQKKE</sequence>
<reference key="1">
    <citation type="journal article" date="2010" name="PLoS ONE">
        <title>Genome sequence of Cronobacter sakazakii BAA-894 and comparative genomic hybridization analysis with other Cronobacter species.</title>
        <authorList>
            <person name="Kucerova E."/>
            <person name="Clifton S.W."/>
            <person name="Xia X.Q."/>
            <person name="Long F."/>
            <person name="Porwollik S."/>
            <person name="Fulton L."/>
            <person name="Fronick C."/>
            <person name="Minx P."/>
            <person name="Kyung K."/>
            <person name="Warren W."/>
            <person name="Fulton R."/>
            <person name="Feng D."/>
            <person name="Wollam A."/>
            <person name="Shah N."/>
            <person name="Bhonagiri V."/>
            <person name="Nash W.E."/>
            <person name="Hallsworth-Pepin K."/>
            <person name="Wilson R.K."/>
            <person name="McClelland M."/>
            <person name="Forsythe S.J."/>
        </authorList>
    </citation>
    <scope>NUCLEOTIDE SEQUENCE [LARGE SCALE GENOMIC DNA]</scope>
    <source>
        <strain>ATCC BAA-894</strain>
    </source>
</reference>
<protein>
    <recommendedName>
        <fullName evidence="1">Glycerol-3-phosphate acyltransferase</fullName>
    </recommendedName>
    <alternativeName>
        <fullName evidence="1">Acyl-PO4 G3P acyltransferase</fullName>
    </alternativeName>
    <alternativeName>
        <fullName evidence="1">Acyl-phosphate--glycerol-3-phosphate acyltransferase</fullName>
    </alternativeName>
    <alternativeName>
        <fullName evidence="1">G3P acyltransferase</fullName>
        <shortName evidence="1">GPAT</shortName>
        <ecNumber evidence="1">2.3.1.275</ecNumber>
    </alternativeName>
    <alternativeName>
        <fullName evidence="1">Lysophosphatidic acid synthase</fullName>
        <shortName evidence="1">LPA synthase</shortName>
    </alternativeName>
</protein>
<feature type="chain" id="PRO_1000064174" description="Glycerol-3-phosphate acyltransferase">
    <location>
        <begin position="1"/>
        <end position="205"/>
    </location>
</feature>
<feature type="transmembrane region" description="Helical" evidence="1">
    <location>
        <begin position="4"/>
        <end position="24"/>
    </location>
</feature>
<feature type="transmembrane region" description="Helical" evidence="1">
    <location>
        <begin position="80"/>
        <end position="100"/>
    </location>
</feature>
<feature type="transmembrane region" description="Helical" evidence="1">
    <location>
        <begin position="112"/>
        <end position="132"/>
    </location>
</feature>
<feature type="transmembrane region" description="Helical" evidence="1">
    <location>
        <begin position="138"/>
        <end position="158"/>
    </location>
</feature>